<reference key="1">
    <citation type="journal article" date="1981" name="Virology">
        <title>Nucleotide sequence of the influenza A/duck/Alberta/60/76 virus NS RNA: conservation of the NS1/NS2 overlapping gene structure in a divergent influenza virus RNA segment.</title>
        <authorList>
            <person name="Baez M."/>
            <person name="Zazra J.J."/>
            <person name="Elliott R.M."/>
            <person name="Young J.F."/>
            <person name="Palese P."/>
        </authorList>
    </citation>
    <scope>NUCLEOTIDE SEQUENCE [GENOMIC RNA]</scope>
</reference>
<protein>
    <recommendedName>
        <fullName evidence="1">Nuclear export protein</fullName>
        <shortName evidence="1">NEP</shortName>
    </recommendedName>
    <alternativeName>
        <fullName evidence="1">Non-structural protein 2</fullName>
        <shortName evidence="1">NS2</shortName>
    </alternativeName>
</protein>
<evidence type="ECO:0000255" key="1">
    <source>
        <dbReference type="HAMAP-Rule" id="MF_04067"/>
    </source>
</evidence>
<proteinExistence type="inferred from homology"/>
<gene>
    <name evidence="1" type="primary">NS</name>
</gene>
<comment type="function">
    <text evidence="1">Mediates the nuclear export of encapsidated genomic RNAs (ribonucleoproteins, RNPs). Acts as an adapter between viral RNPs complexes and the nuclear export machinery of the cell. Possesses no intrinsic RNA-binding activity, but includes a C-terminal M1-binding domain. This domain is believed to allow recognition of RNPs bound to the protein M1. Since protein M1 is not available in large quantities before late stages of infection, such an indirect recognition mechanism probably ensures that genomic RNPs are not exported from the host nucleus until sufficient quantities of viral mRNA and progeny genomic RNA have been synthesized. Furthermore, the RNPs enter the host cytoplasm only when associated with the M1 protein that is necessary to guide them to the plasma membrane. May down-regulate viral RNA synthesis when overproduced.</text>
</comment>
<comment type="subunit">
    <text evidence="1">Interacts with protein M1. May interact with host nucleoporin RAB/HRB and exportin XPO1/CRM1.</text>
</comment>
<comment type="subcellular location">
    <subcellularLocation>
        <location evidence="1">Virion</location>
    </subcellularLocation>
    <subcellularLocation>
        <location evidence="1">Host nucleus</location>
    </subcellularLocation>
</comment>
<comment type="alternative products">
    <event type="alternative splicing"/>
    <isoform>
        <id>P69261-1</id>
        <name>NEP</name>
        <name>NS2</name>
        <sequence type="displayed"/>
    </isoform>
    <isoform>
        <id>P69270-1</id>
        <name>NS1</name>
        <sequence type="external"/>
    </isoform>
</comment>
<comment type="miscellaneous">
    <text>Average number present in a viral particle is estimated to be 130-200 molecules.</text>
</comment>
<comment type="similarity">
    <text evidence="1">Belongs to the influenza viruses NEP family.</text>
</comment>
<accession>P69261</accession>
<accession>P03510</accession>
<accession>P13151</accession>
<dbReference type="EMBL" id="J02105">
    <property type="protein sequence ID" value="AAA43508.1"/>
    <property type="molecule type" value="Genomic_RNA"/>
</dbReference>
<dbReference type="PIR" id="A04098">
    <property type="entry name" value="MNIV26"/>
</dbReference>
<dbReference type="SMR" id="P69261"/>
<dbReference type="GO" id="GO:0042025">
    <property type="term" value="C:host cell nucleus"/>
    <property type="evidence" value="ECO:0007669"/>
    <property type="project" value="UniProtKB-SubCell"/>
</dbReference>
<dbReference type="GO" id="GO:0044423">
    <property type="term" value="C:virion component"/>
    <property type="evidence" value="ECO:0007669"/>
    <property type="project" value="UniProtKB-UniRule"/>
</dbReference>
<dbReference type="GO" id="GO:0039675">
    <property type="term" value="P:exit of virus from host cell nucleus through nuclear pore"/>
    <property type="evidence" value="ECO:0007669"/>
    <property type="project" value="UniProtKB-UniRule"/>
</dbReference>
<dbReference type="Gene3D" id="1.10.287.230">
    <property type="match status" value="1"/>
</dbReference>
<dbReference type="HAMAP" id="MF_04067">
    <property type="entry name" value="INFV_NEP"/>
    <property type="match status" value="1"/>
</dbReference>
<dbReference type="InterPro" id="IPR000968">
    <property type="entry name" value="Flu_NS2"/>
</dbReference>
<dbReference type="Pfam" id="PF00601">
    <property type="entry name" value="Flu_NS2"/>
    <property type="match status" value="1"/>
</dbReference>
<dbReference type="SUPFAM" id="SSF101156">
    <property type="entry name" value="Nonstructural protein ns2, Nep, M1-binding domain"/>
    <property type="match status" value="1"/>
</dbReference>
<name>NEP_I76A2</name>
<organismHost>
    <name type="scientific">Aves</name>
    <dbReference type="NCBI Taxonomy" id="8782"/>
</organismHost>
<organismHost>
    <name type="scientific">Sus scrofa</name>
    <name type="common">Pig</name>
    <dbReference type="NCBI Taxonomy" id="9823"/>
</organismHost>
<feature type="chain" id="PRO_0000078982" description="Nuclear export protein">
    <location>
        <begin position="1"/>
        <end position="121"/>
    </location>
</feature>
<feature type="short sequence motif" description="Nuclear export signal" evidence="1">
    <location>
        <begin position="12"/>
        <end position="21"/>
    </location>
</feature>
<feature type="short sequence motif" description="Nuclear export signal" evidence="1">
    <location>
        <begin position="85"/>
        <end position="94"/>
    </location>
</feature>
<organism>
    <name type="scientific">Influenza A virus (strain A/Duck/Alberta/60/1976 H12N5)</name>
    <dbReference type="NCBI Taxonomy" id="385582"/>
    <lineage>
        <taxon>Viruses</taxon>
        <taxon>Riboviria</taxon>
        <taxon>Orthornavirae</taxon>
        <taxon>Negarnaviricota</taxon>
        <taxon>Polyploviricotina</taxon>
        <taxon>Insthoviricetes</taxon>
        <taxon>Articulavirales</taxon>
        <taxon>Orthomyxoviridae</taxon>
        <taxon>Alphainfluenzavirus</taxon>
        <taxon>Alphainfluenzavirus influenzae</taxon>
        <taxon>Influenza A virus</taxon>
    </lineage>
</organism>
<sequence length="121" mass="14287">MDSNTITSFQDILQRMSKMQLESSSVDLNGMITQFERLKIYRDSLGESVMRMGDLHSLQSRNATWREELSQKFEEIRWLIAECRNILTKTENSFEQITFLQALQLLLEVESEIRTFSFQLI</sequence>
<keyword id="KW-0025">Alternative splicing</keyword>
<keyword id="KW-1048">Host nucleus</keyword>
<keyword id="KW-0945">Host-virus interaction</keyword>
<keyword id="KW-0813">Transport</keyword>
<keyword id="KW-0946">Virion</keyword>